<evidence type="ECO:0000255" key="1">
    <source>
        <dbReference type="HAMAP-Rule" id="MF_00360"/>
    </source>
</evidence>
<evidence type="ECO:0000256" key="2">
    <source>
        <dbReference type="SAM" id="MobiDB-lite"/>
    </source>
</evidence>
<evidence type="ECO:0000305" key="3"/>
<comment type="function">
    <text evidence="1">Binds together with bS18 to 16S ribosomal RNA.</text>
</comment>
<comment type="similarity">
    <text evidence="1">Belongs to the bacterial ribosomal protein bS6 family.</text>
</comment>
<organism>
    <name type="scientific">Salmonella typhi</name>
    <dbReference type="NCBI Taxonomy" id="90370"/>
    <lineage>
        <taxon>Bacteria</taxon>
        <taxon>Pseudomonadati</taxon>
        <taxon>Pseudomonadota</taxon>
        <taxon>Gammaproteobacteria</taxon>
        <taxon>Enterobacterales</taxon>
        <taxon>Enterobacteriaceae</taxon>
        <taxon>Salmonella</taxon>
    </lineage>
</organism>
<proteinExistence type="inferred from homology"/>
<keyword id="KW-0687">Ribonucleoprotein</keyword>
<keyword id="KW-0689">Ribosomal protein</keyword>
<keyword id="KW-0694">RNA-binding</keyword>
<keyword id="KW-0699">rRNA-binding</keyword>
<dbReference type="EMBL" id="AL513382">
    <property type="protein sequence ID" value="CAD06868.1"/>
    <property type="molecule type" value="Genomic_DNA"/>
</dbReference>
<dbReference type="EMBL" id="AE014613">
    <property type="protein sequence ID" value="AAO71889.1"/>
    <property type="molecule type" value="Genomic_DNA"/>
</dbReference>
<dbReference type="RefSeq" id="NP_458825.1">
    <property type="nucleotide sequence ID" value="NC_003198.1"/>
</dbReference>
<dbReference type="RefSeq" id="WP_001216673.1">
    <property type="nucleotide sequence ID" value="NZ_WSUR01000012.1"/>
</dbReference>
<dbReference type="SMR" id="P66594"/>
<dbReference type="STRING" id="220341.gene:17588568"/>
<dbReference type="GeneID" id="92804768"/>
<dbReference type="KEGG" id="stt:t4442"/>
<dbReference type="KEGG" id="sty:STY4747"/>
<dbReference type="PATRIC" id="fig|220341.7.peg.4849"/>
<dbReference type="eggNOG" id="COG0360">
    <property type="taxonomic scope" value="Bacteria"/>
</dbReference>
<dbReference type="HOGENOM" id="CLU_113441_6_1_6"/>
<dbReference type="OMA" id="AYPIQHK"/>
<dbReference type="OrthoDB" id="9812702at2"/>
<dbReference type="Proteomes" id="UP000000541">
    <property type="component" value="Chromosome"/>
</dbReference>
<dbReference type="Proteomes" id="UP000002670">
    <property type="component" value="Chromosome"/>
</dbReference>
<dbReference type="GO" id="GO:0022627">
    <property type="term" value="C:cytosolic small ribosomal subunit"/>
    <property type="evidence" value="ECO:0007669"/>
    <property type="project" value="TreeGrafter"/>
</dbReference>
<dbReference type="GO" id="GO:0070181">
    <property type="term" value="F:small ribosomal subunit rRNA binding"/>
    <property type="evidence" value="ECO:0007669"/>
    <property type="project" value="TreeGrafter"/>
</dbReference>
<dbReference type="GO" id="GO:0003735">
    <property type="term" value="F:structural constituent of ribosome"/>
    <property type="evidence" value="ECO:0007669"/>
    <property type="project" value="InterPro"/>
</dbReference>
<dbReference type="GO" id="GO:0006412">
    <property type="term" value="P:translation"/>
    <property type="evidence" value="ECO:0007669"/>
    <property type="project" value="UniProtKB-UniRule"/>
</dbReference>
<dbReference type="CDD" id="cd00473">
    <property type="entry name" value="bS6"/>
    <property type="match status" value="1"/>
</dbReference>
<dbReference type="FunFam" id="3.30.70.60:FF:000003">
    <property type="entry name" value="30S ribosomal protein S6"/>
    <property type="match status" value="1"/>
</dbReference>
<dbReference type="Gene3D" id="3.30.70.60">
    <property type="match status" value="1"/>
</dbReference>
<dbReference type="HAMAP" id="MF_00360">
    <property type="entry name" value="Ribosomal_bS6"/>
    <property type="match status" value="1"/>
</dbReference>
<dbReference type="InterPro" id="IPR000529">
    <property type="entry name" value="Ribosomal_bS6"/>
</dbReference>
<dbReference type="InterPro" id="IPR020815">
    <property type="entry name" value="Ribosomal_bS6_CS"/>
</dbReference>
<dbReference type="InterPro" id="IPR035980">
    <property type="entry name" value="Ribosomal_bS6_sf"/>
</dbReference>
<dbReference type="InterPro" id="IPR020814">
    <property type="entry name" value="Ribosomal_S6_plastid/chlpt"/>
</dbReference>
<dbReference type="InterPro" id="IPR014717">
    <property type="entry name" value="Transl_elong_EF1B/ribsomal_bS6"/>
</dbReference>
<dbReference type="NCBIfam" id="TIGR00166">
    <property type="entry name" value="S6"/>
    <property type="match status" value="1"/>
</dbReference>
<dbReference type="PANTHER" id="PTHR21011">
    <property type="entry name" value="MITOCHONDRIAL 28S RIBOSOMAL PROTEIN S6"/>
    <property type="match status" value="1"/>
</dbReference>
<dbReference type="PANTHER" id="PTHR21011:SF1">
    <property type="entry name" value="SMALL RIBOSOMAL SUBUNIT PROTEIN BS6M"/>
    <property type="match status" value="1"/>
</dbReference>
<dbReference type="Pfam" id="PF01250">
    <property type="entry name" value="Ribosomal_S6"/>
    <property type="match status" value="1"/>
</dbReference>
<dbReference type="SUPFAM" id="SSF54995">
    <property type="entry name" value="Ribosomal protein S6"/>
    <property type="match status" value="1"/>
</dbReference>
<dbReference type="PROSITE" id="PS01048">
    <property type="entry name" value="RIBOSOMAL_S6"/>
    <property type="match status" value="1"/>
</dbReference>
<feature type="chain" id="PRO_0000176831" description="Small ribosomal subunit protein bS6">
    <location>
        <begin position="1"/>
        <end position="131"/>
    </location>
</feature>
<feature type="region of interest" description="Disordered" evidence="2">
    <location>
        <begin position="98"/>
        <end position="131"/>
    </location>
</feature>
<feature type="compositionally biased region" description="Basic and acidic residues" evidence="2">
    <location>
        <begin position="104"/>
        <end position="116"/>
    </location>
</feature>
<feature type="compositionally biased region" description="Acidic residues" evidence="2">
    <location>
        <begin position="120"/>
        <end position="131"/>
    </location>
</feature>
<protein>
    <recommendedName>
        <fullName evidence="1">Small ribosomal subunit protein bS6</fullName>
    </recommendedName>
    <alternativeName>
        <fullName evidence="3">30S ribosomal protein S6</fullName>
    </alternativeName>
</protein>
<accession>P66594</accession>
<accession>Q8XG88</accession>
<sequence length="131" mass="15173">MRHYEIVFMVHPDQSEQVPGMIERYSAAITGAEGKIHRLEDWGRRQLAYPINKLHKAHYVLMNVEAPQEVIDELETTFRFNDAVIRSMVMRTKHAVTEASPMVKAKDERRERRDDFANETADDAEAGDSEE</sequence>
<gene>
    <name evidence="1" type="primary">rpsF</name>
    <name type="ordered locus">STY4747</name>
    <name type="ordered locus">t4442</name>
</gene>
<reference key="1">
    <citation type="journal article" date="2001" name="Nature">
        <title>Complete genome sequence of a multiple drug resistant Salmonella enterica serovar Typhi CT18.</title>
        <authorList>
            <person name="Parkhill J."/>
            <person name="Dougan G."/>
            <person name="James K.D."/>
            <person name="Thomson N.R."/>
            <person name="Pickard D."/>
            <person name="Wain J."/>
            <person name="Churcher C.M."/>
            <person name="Mungall K.L."/>
            <person name="Bentley S.D."/>
            <person name="Holden M.T.G."/>
            <person name="Sebaihia M."/>
            <person name="Baker S."/>
            <person name="Basham D."/>
            <person name="Brooks K."/>
            <person name="Chillingworth T."/>
            <person name="Connerton P."/>
            <person name="Cronin A."/>
            <person name="Davis P."/>
            <person name="Davies R.M."/>
            <person name="Dowd L."/>
            <person name="White N."/>
            <person name="Farrar J."/>
            <person name="Feltwell T."/>
            <person name="Hamlin N."/>
            <person name="Haque A."/>
            <person name="Hien T.T."/>
            <person name="Holroyd S."/>
            <person name="Jagels K."/>
            <person name="Krogh A."/>
            <person name="Larsen T.S."/>
            <person name="Leather S."/>
            <person name="Moule S."/>
            <person name="O'Gaora P."/>
            <person name="Parry C."/>
            <person name="Quail M.A."/>
            <person name="Rutherford K.M."/>
            <person name="Simmonds M."/>
            <person name="Skelton J."/>
            <person name="Stevens K."/>
            <person name="Whitehead S."/>
            <person name="Barrell B.G."/>
        </authorList>
    </citation>
    <scope>NUCLEOTIDE SEQUENCE [LARGE SCALE GENOMIC DNA]</scope>
    <source>
        <strain>CT18</strain>
    </source>
</reference>
<reference key="2">
    <citation type="journal article" date="2003" name="J. Bacteriol.">
        <title>Comparative genomics of Salmonella enterica serovar Typhi strains Ty2 and CT18.</title>
        <authorList>
            <person name="Deng W."/>
            <person name="Liou S.-R."/>
            <person name="Plunkett G. III"/>
            <person name="Mayhew G.F."/>
            <person name="Rose D.J."/>
            <person name="Burland V."/>
            <person name="Kodoyianni V."/>
            <person name="Schwartz D.C."/>
            <person name="Blattner F.R."/>
        </authorList>
    </citation>
    <scope>NUCLEOTIDE SEQUENCE [LARGE SCALE GENOMIC DNA]</scope>
    <source>
        <strain>ATCC 700931 / Ty2</strain>
    </source>
</reference>
<name>RS6_SALTI</name>